<name>GNT13_DICDI</name>
<feature type="chain" id="PRO_0000393408" description="Glycosyltransferase-like protein gnt13">
    <location>
        <begin position="1"/>
        <end position="635"/>
    </location>
</feature>
<feature type="topological domain" description="Cytoplasmic" evidence="1">
    <location>
        <begin position="1"/>
        <end position="18"/>
    </location>
</feature>
<feature type="transmembrane region" description="Helical; Signal-anchor for type II membrane protein" evidence="1">
    <location>
        <begin position="19"/>
        <end position="38"/>
    </location>
</feature>
<feature type="topological domain" description="Extracellular" evidence="1">
    <location>
        <begin position="39"/>
        <end position="635"/>
    </location>
</feature>
<feature type="region of interest" description="Disordered" evidence="2">
    <location>
        <begin position="300"/>
        <end position="358"/>
    </location>
</feature>
<feature type="region of interest" description="Disordered" evidence="2">
    <location>
        <begin position="389"/>
        <end position="458"/>
    </location>
</feature>
<feature type="compositionally biased region" description="Low complexity" evidence="2">
    <location>
        <begin position="389"/>
        <end position="456"/>
    </location>
</feature>
<feature type="glycosylation site" description="N-linked (GlcNAc...) asparagine" evidence="1">
    <location>
        <position position="41"/>
    </location>
</feature>
<feature type="glycosylation site" description="N-linked (GlcNAc...) asparagine" evidence="1">
    <location>
        <position position="179"/>
    </location>
</feature>
<feature type="glycosylation site" description="N-linked (GlcNAc...) asparagine" evidence="1">
    <location>
        <position position="393"/>
    </location>
</feature>
<feature type="glycosylation site" description="N-linked (GlcNAc...) asparagine" evidence="1">
    <location>
        <position position="535"/>
    </location>
</feature>
<accession>Q54SH2</accession>
<keyword id="KW-0325">Glycoprotein</keyword>
<keyword id="KW-0472">Membrane</keyword>
<keyword id="KW-1185">Reference proteome</keyword>
<keyword id="KW-0735">Signal-anchor</keyword>
<keyword id="KW-0812">Transmembrane</keyword>
<keyword id="KW-1133">Transmembrane helix</keyword>
<protein>
    <recommendedName>
        <fullName>Glycosyltransferase-like protein gnt13</fullName>
    </recommendedName>
</protein>
<dbReference type="EMBL" id="AAFI02000047">
    <property type="protein sequence ID" value="EAL66094.1"/>
    <property type="molecule type" value="Genomic_DNA"/>
</dbReference>
<dbReference type="RefSeq" id="XP_640067.1">
    <property type="nucleotide sequence ID" value="XM_634975.1"/>
</dbReference>
<dbReference type="SMR" id="Q54SH2"/>
<dbReference type="GlyCosmos" id="Q54SH2">
    <property type="glycosylation" value="4 sites, No reported glycans"/>
</dbReference>
<dbReference type="GlyGen" id="Q54SH2">
    <property type="glycosylation" value="4 sites"/>
</dbReference>
<dbReference type="PaxDb" id="44689-DDB0231851"/>
<dbReference type="EnsemblProtists" id="EAL66094">
    <property type="protein sequence ID" value="EAL66094"/>
    <property type="gene ID" value="DDB_G0282469"/>
</dbReference>
<dbReference type="GeneID" id="8623596"/>
<dbReference type="KEGG" id="ddi:DDB_G0282469"/>
<dbReference type="dictyBase" id="DDB_G0282469">
    <property type="gene designation" value="gnt13"/>
</dbReference>
<dbReference type="VEuPathDB" id="AmoebaDB:DDB_G0282469"/>
<dbReference type="eggNOG" id="KOG3765">
    <property type="taxonomic scope" value="Eukaryota"/>
</dbReference>
<dbReference type="HOGENOM" id="CLU_528327_0_0_1"/>
<dbReference type="InParanoid" id="Q54SH2"/>
<dbReference type="PhylomeDB" id="Q54SH2"/>
<dbReference type="PRO" id="PR:Q54SH2"/>
<dbReference type="Proteomes" id="UP000002195">
    <property type="component" value="Chromosome 3"/>
</dbReference>
<dbReference type="GO" id="GO:0016020">
    <property type="term" value="C:membrane"/>
    <property type="evidence" value="ECO:0007669"/>
    <property type="project" value="UniProtKB-SubCell"/>
</dbReference>
<dbReference type="GO" id="GO:0015020">
    <property type="term" value="F:glucuronosyltransferase activity"/>
    <property type="evidence" value="ECO:0000318"/>
    <property type="project" value="GO_Central"/>
</dbReference>
<dbReference type="GO" id="GO:0042285">
    <property type="term" value="F:xylosyltransferase activity"/>
    <property type="evidence" value="ECO:0000318"/>
    <property type="project" value="GO_Central"/>
</dbReference>
<dbReference type="GO" id="GO:0035269">
    <property type="term" value="P:protein O-linked mannosylation"/>
    <property type="evidence" value="ECO:0000318"/>
    <property type="project" value="GO_Central"/>
</dbReference>
<dbReference type="InterPro" id="IPR051292">
    <property type="entry name" value="Xyl/GlcA_transferase"/>
</dbReference>
<dbReference type="PANTHER" id="PTHR12270:SF52">
    <property type="entry name" value="GLYCOSYLTRANSFERASE-LIKE PROTEIN GNT13-RELATED"/>
    <property type="match status" value="1"/>
</dbReference>
<dbReference type="PANTHER" id="PTHR12270">
    <property type="entry name" value="GLYCOSYLTRANSFERASE-RELATED"/>
    <property type="match status" value="1"/>
</dbReference>
<dbReference type="Pfam" id="PF13896">
    <property type="entry name" value="Glyco_transf_49"/>
    <property type="match status" value="2"/>
</dbReference>
<organism>
    <name type="scientific">Dictyostelium discoideum</name>
    <name type="common">Social amoeba</name>
    <dbReference type="NCBI Taxonomy" id="44689"/>
    <lineage>
        <taxon>Eukaryota</taxon>
        <taxon>Amoebozoa</taxon>
        <taxon>Evosea</taxon>
        <taxon>Eumycetozoa</taxon>
        <taxon>Dictyostelia</taxon>
        <taxon>Dictyosteliales</taxon>
        <taxon>Dictyosteliaceae</taxon>
        <taxon>Dictyostelium</taxon>
    </lineage>
</organism>
<sequence>MNINTLIINFNKVKRMKNFLILTLLVVMVVVFLQGPTLMINNSGQGMGHNVEKIKLEPHVKIQRENLERKKIPPKQDFTDGLHASFTTIPFYYKANGIINQNTNKLYRNYQITIVTQTTVDRLSKVSMMAEKWKAPLSVAVFIKDSENPKAEIEKLEKHIENDYPALSYYSDIHILISNKTRYPVNNLRNLAIEHSRTDLVFIMDADFLPPLGLHDYILSQKYYFNIKPSNQHYFKNNLLNFYHKKPLNNNDNNNDYNNNPSKIPYDQIIDYSTNINTDSEFNNINYNMENLNENEYLKNINNNNNNNDNNYNNNNNNNNNNNNNNNNNNNNNNNNNNNNNNNNNNNNNNNNNNNNIDNNIDNKIDNIDNNIDNNNNIDNINNNNNINNIDNNNSNYNDNNNNNNNNNNNNNNNNNNNNNNNNNNNNNNNNNNNNNNNNNNNNNNNNNNNNNNNNNEPLKVAFVIPSFSSHIPPSQHPNNKMDMIDLVKSSKIEPSNSRVCKKCHSPTNFEKWMDAVEPYEVEYKWIFEPYLVFNKTQNIPFDERLKGYGFDKNSHAFSMAVEGFHFVVLPDSFIIHVNHSPSTWEGPSLDEQQWDALRVVCEIIPDVKIKNGYNPNVVLFNEPLPNECFSDHHW</sequence>
<comment type="subcellular location">
    <subcellularLocation>
        <location evidence="4">Membrane</location>
        <topology evidence="4">Single-pass type II membrane protein</topology>
    </subcellularLocation>
</comment>
<comment type="developmental stage">
    <text evidence="3">Expressed at a relatively steady level during vegetative growth and development.</text>
</comment>
<comment type="similarity">
    <text evidence="4">Belongs to the glycosyltransferase 8 family. Highly divergent.</text>
</comment>
<evidence type="ECO:0000255" key="1"/>
<evidence type="ECO:0000256" key="2">
    <source>
        <dbReference type="SAM" id="MobiDB-lite"/>
    </source>
</evidence>
<evidence type="ECO:0000269" key="3">
    <source>
    </source>
</evidence>
<evidence type="ECO:0000305" key="4"/>
<proteinExistence type="evidence at transcript level"/>
<reference key="1">
    <citation type="journal article" date="2005" name="Nature">
        <title>The genome of the social amoeba Dictyostelium discoideum.</title>
        <authorList>
            <person name="Eichinger L."/>
            <person name="Pachebat J.A."/>
            <person name="Gloeckner G."/>
            <person name="Rajandream M.A."/>
            <person name="Sucgang R."/>
            <person name="Berriman M."/>
            <person name="Song J."/>
            <person name="Olsen R."/>
            <person name="Szafranski K."/>
            <person name="Xu Q."/>
            <person name="Tunggal B."/>
            <person name="Kummerfeld S."/>
            <person name="Madera M."/>
            <person name="Konfortov B.A."/>
            <person name="Rivero F."/>
            <person name="Bankier A.T."/>
            <person name="Lehmann R."/>
            <person name="Hamlin N."/>
            <person name="Davies R."/>
            <person name="Gaudet P."/>
            <person name="Fey P."/>
            <person name="Pilcher K."/>
            <person name="Chen G."/>
            <person name="Saunders D."/>
            <person name="Sodergren E.J."/>
            <person name="Davis P."/>
            <person name="Kerhornou A."/>
            <person name="Nie X."/>
            <person name="Hall N."/>
            <person name="Anjard C."/>
            <person name="Hemphill L."/>
            <person name="Bason N."/>
            <person name="Farbrother P."/>
            <person name="Desany B."/>
            <person name="Just E."/>
            <person name="Morio T."/>
            <person name="Rost R."/>
            <person name="Churcher C.M."/>
            <person name="Cooper J."/>
            <person name="Haydock S."/>
            <person name="van Driessche N."/>
            <person name="Cronin A."/>
            <person name="Goodhead I."/>
            <person name="Muzny D.M."/>
            <person name="Mourier T."/>
            <person name="Pain A."/>
            <person name="Lu M."/>
            <person name="Harper D."/>
            <person name="Lindsay R."/>
            <person name="Hauser H."/>
            <person name="James K.D."/>
            <person name="Quiles M."/>
            <person name="Madan Babu M."/>
            <person name="Saito T."/>
            <person name="Buchrieser C."/>
            <person name="Wardroper A."/>
            <person name="Felder M."/>
            <person name="Thangavelu M."/>
            <person name="Johnson D."/>
            <person name="Knights A."/>
            <person name="Loulseged H."/>
            <person name="Mungall K.L."/>
            <person name="Oliver K."/>
            <person name="Price C."/>
            <person name="Quail M.A."/>
            <person name="Urushihara H."/>
            <person name="Hernandez J."/>
            <person name="Rabbinowitsch E."/>
            <person name="Steffen D."/>
            <person name="Sanders M."/>
            <person name="Ma J."/>
            <person name="Kohara Y."/>
            <person name="Sharp S."/>
            <person name="Simmonds M.N."/>
            <person name="Spiegler S."/>
            <person name="Tivey A."/>
            <person name="Sugano S."/>
            <person name="White B."/>
            <person name="Walker D."/>
            <person name="Woodward J.R."/>
            <person name="Winckler T."/>
            <person name="Tanaka Y."/>
            <person name="Shaulsky G."/>
            <person name="Schleicher M."/>
            <person name="Weinstock G.M."/>
            <person name="Rosenthal A."/>
            <person name="Cox E.C."/>
            <person name="Chisholm R.L."/>
            <person name="Gibbs R.A."/>
            <person name="Loomis W.F."/>
            <person name="Platzer M."/>
            <person name="Kay R.R."/>
            <person name="Williams J.G."/>
            <person name="Dear P.H."/>
            <person name="Noegel A.A."/>
            <person name="Barrell B.G."/>
            <person name="Kuspa A."/>
        </authorList>
    </citation>
    <scope>NUCLEOTIDE SEQUENCE [LARGE SCALE GENOMIC DNA]</scope>
    <source>
        <strain>AX4</strain>
    </source>
</reference>
<reference key="2">
    <citation type="journal article" date="2007" name="Biochem. Biophys. Res. Commun.">
        <title>Dictyostelium gnt15 encodes a protein with similarity to LARGE and plays an essential role in development.</title>
        <authorList>
            <person name="Pang T.L."/>
            <person name="Wu C.J."/>
            <person name="Chen P.A."/>
            <person name="Weng Y.L."/>
            <person name="Chen M.Y."/>
        </authorList>
    </citation>
    <scope>DEVELOPMENTAL STAGE</scope>
</reference>
<gene>
    <name type="primary">gnt13</name>
    <name type="ORF">DDB_G0282469</name>
</gene>